<organism>
    <name type="scientific">Klebsiella pneumoniae (strain 342)</name>
    <dbReference type="NCBI Taxonomy" id="507522"/>
    <lineage>
        <taxon>Bacteria</taxon>
        <taxon>Pseudomonadati</taxon>
        <taxon>Pseudomonadota</taxon>
        <taxon>Gammaproteobacteria</taxon>
        <taxon>Enterobacterales</taxon>
        <taxon>Enterobacteriaceae</taxon>
        <taxon>Klebsiella/Raoultella group</taxon>
        <taxon>Klebsiella</taxon>
        <taxon>Klebsiella pneumoniae complex</taxon>
    </lineage>
</organism>
<proteinExistence type="inferred from homology"/>
<name>PYRB_KLEP3</name>
<sequence>MANPLYQKHIISINDLSREDLELVLATAAKLKANPQPELLKHKVIASCFFEASTRTRLSFETSMHRLGASVVGFSDSANTSLGKKGETLADTISVISTYVDAIVMRHPQEGAARLATEFSGGVPVLNAGDGANQHPTQTLLDLFTIQETQGRLENLNVAMVGDLKYGRTVHSLTQALAKFSGNRFYFIAPDALAMPQYILDMLDEKGIAWSLHSAIDDVMAEVDILYMTRVQKERLDPSEYANVKAQFVLRAADLEGARANMKVLHPLPRIDEITTDVDKTPHAWYFQQAGNGIFARQALLALVLNSELAL</sequence>
<comment type="function">
    <text evidence="1">Catalyzes the condensation of carbamoyl phosphate and aspartate to form carbamoyl aspartate and inorganic phosphate, the committed step in the de novo pyrimidine nucleotide biosynthesis pathway.</text>
</comment>
<comment type="catalytic activity">
    <reaction evidence="1">
        <text>carbamoyl phosphate + L-aspartate = N-carbamoyl-L-aspartate + phosphate + H(+)</text>
        <dbReference type="Rhea" id="RHEA:20013"/>
        <dbReference type="ChEBI" id="CHEBI:15378"/>
        <dbReference type="ChEBI" id="CHEBI:29991"/>
        <dbReference type="ChEBI" id="CHEBI:32814"/>
        <dbReference type="ChEBI" id="CHEBI:43474"/>
        <dbReference type="ChEBI" id="CHEBI:58228"/>
        <dbReference type="EC" id="2.1.3.2"/>
    </reaction>
</comment>
<comment type="pathway">
    <text evidence="1">Pyrimidine metabolism; UMP biosynthesis via de novo pathway; (S)-dihydroorotate from bicarbonate: step 2/3.</text>
</comment>
<comment type="subunit">
    <text evidence="1">Heterododecamer (2C3:3R2) of six catalytic PyrB chains organized as two trimers (C3), and six regulatory PyrI chains organized as three dimers (R2).</text>
</comment>
<comment type="similarity">
    <text evidence="1">Belongs to the aspartate/ornithine carbamoyltransferase superfamily. ATCase family.</text>
</comment>
<keyword id="KW-0665">Pyrimidine biosynthesis</keyword>
<keyword id="KW-0808">Transferase</keyword>
<feature type="chain" id="PRO_1000088771" description="Aspartate carbamoyltransferase catalytic subunit">
    <location>
        <begin position="1"/>
        <end position="311"/>
    </location>
</feature>
<feature type="binding site" evidence="1">
    <location>
        <position position="55"/>
    </location>
    <ligand>
        <name>carbamoyl phosphate</name>
        <dbReference type="ChEBI" id="CHEBI:58228"/>
    </ligand>
</feature>
<feature type="binding site" evidence="1">
    <location>
        <position position="56"/>
    </location>
    <ligand>
        <name>carbamoyl phosphate</name>
        <dbReference type="ChEBI" id="CHEBI:58228"/>
    </ligand>
</feature>
<feature type="binding site" evidence="1">
    <location>
        <position position="85"/>
    </location>
    <ligand>
        <name>L-aspartate</name>
        <dbReference type="ChEBI" id="CHEBI:29991"/>
    </ligand>
</feature>
<feature type="binding site" evidence="1">
    <location>
        <position position="106"/>
    </location>
    <ligand>
        <name>carbamoyl phosphate</name>
        <dbReference type="ChEBI" id="CHEBI:58228"/>
    </ligand>
</feature>
<feature type="binding site" evidence="1">
    <location>
        <position position="135"/>
    </location>
    <ligand>
        <name>carbamoyl phosphate</name>
        <dbReference type="ChEBI" id="CHEBI:58228"/>
    </ligand>
</feature>
<feature type="binding site" evidence="1">
    <location>
        <position position="138"/>
    </location>
    <ligand>
        <name>carbamoyl phosphate</name>
        <dbReference type="ChEBI" id="CHEBI:58228"/>
    </ligand>
</feature>
<feature type="binding site" evidence="1">
    <location>
        <position position="168"/>
    </location>
    <ligand>
        <name>L-aspartate</name>
        <dbReference type="ChEBI" id="CHEBI:29991"/>
    </ligand>
</feature>
<feature type="binding site" evidence="1">
    <location>
        <position position="230"/>
    </location>
    <ligand>
        <name>L-aspartate</name>
        <dbReference type="ChEBI" id="CHEBI:29991"/>
    </ligand>
</feature>
<feature type="binding site" evidence="1">
    <location>
        <position position="268"/>
    </location>
    <ligand>
        <name>carbamoyl phosphate</name>
        <dbReference type="ChEBI" id="CHEBI:58228"/>
    </ligand>
</feature>
<feature type="binding site" evidence="1">
    <location>
        <position position="269"/>
    </location>
    <ligand>
        <name>carbamoyl phosphate</name>
        <dbReference type="ChEBI" id="CHEBI:58228"/>
    </ligand>
</feature>
<gene>
    <name evidence="1" type="primary">pyrB</name>
    <name type="ordered locus">KPK_5011</name>
</gene>
<accession>B5Y2U6</accession>
<evidence type="ECO:0000255" key="1">
    <source>
        <dbReference type="HAMAP-Rule" id="MF_00001"/>
    </source>
</evidence>
<reference key="1">
    <citation type="journal article" date="2008" name="PLoS Genet.">
        <title>Complete genome sequence of the N2-fixing broad host range endophyte Klebsiella pneumoniae 342 and virulence predictions verified in mice.</title>
        <authorList>
            <person name="Fouts D.E."/>
            <person name="Tyler H.L."/>
            <person name="DeBoy R.T."/>
            <person name="Daugherty S."/>
            <person name="Ren Q."/>
            <person name="Badger J.H."/>
            <person name="Durkin A.S."/>
            <person name="Huot H."/>
            <person name="Shrivastava S."/>
            <person name="Kothari S."/>
            <person name="Dodson R.J."/>
            <person name="Mohamoud Y."/>
            <person name="Khouri H."/>
            <person name="Roesch L.F.W."/>
            <person name="Krogfelt K.A."/>
            <person name="Struve C."/>
            <person name="Triplett E.W."/>
            <person name="Methe B.A."/>
        </authorList>
    </citation>
    <scope>NUCLEOTIDE SEQUENCE [LARGE SCALE GENOMIC DNA]</scope>
    <source>
        <strain>342</strain>
    </source>
</reference>
<dbReference type="EC" id="2.1.3.2" evidence="1"/>
<dbReference type="EMBL" id="CP000964">
    <property type="protein sequence ID" value="ACI08326.1"/>
    <property type="molecule type" value="Genomic_DNA"/>
</dbReference>
<dbReference type="SMR" id="B5Y2U6"/>
<dbReference type="KEGG" id="kpe:KPK_5011"/>
<dbReference type="HOGENOM" id="CLU_043846_1_2_6"/>
<dbReference type="UniPathway" id="UPA00070">
    <property type="reaction ID" value="UER00116"/>
</dbReference>
<dbReference type="Proteomes" id="UP000001734">
    <property type="component" value="Chromosome"/>
</dbReference>
<dbReference type="GO" id="GO:0005829">
    <property type="term" value="C:cytosol"/>
    <property type="evidence" value="ECO:0007669"/>
    <property type="project" value="TreeGrafter"/>
</dbReference>
<dbReference type="GO" id="GO:0016597">
    <property type="term" value="F:amino acid binding"/>
    <property type="evidence" value="ECO:0007669"/>
    <property type="project" value="InterPro"/>
</dbReference>
<dbReference type="GO" id="GO:0004070">
    <property type="term" value="F:aspartate carbamoyltransferase activity"/>
    <property type="evidence" value="ECO:0007669"/>
    <property type="project" value="UniProtKB-UniRule"/>
</dbReference>
<dbReference type="GO" id="GO:0006207">
    <property type="term" value="P:'de novo' pyrimidine nucleobase biosynthetic process"/>
    <property type="evidence" value="ECO:0007669"/>
    <property type="project" value="InterPro"/>
</dbReference>
<dbReference type="GO" id="GO:0044205">
    <property type="term" value="P:'de novo' UMP biosynthetic process"/>
    <property type="evidence" value="ECO:0007669"/>
    <property type="project" value="UniProtKB-UniRule"/>
</dbReference>
<dbReference type="GO" id="GO:0006520">
    <property type="term" value="P:amino acid metabolic process"/>
    <property type="evidence" value="ECO:0007669"/>
    <property type="project" value="InterPro"/>
</dbReference>
<dbReference type="FunFam" id="3.40.50.1370:FF:000001">
    <property type="entry name" value="Aspartate carbamoyltransferase"/>
    <property type="match status" value="1"/>
</dbReference>
<dbReference type="FunFam" id="3.40.50.1370:FF:000002">
    <property type="entry name" value="Aspartate carbamoyltransferase 2"/>
    <property type="match status" value="1"/>
</dbReference>
<dbReference type="Gene3D" id="3.40.50.1370">
    <property type="entry name" value="Aspartate/ornithine carbamoyltransferase"/>
    <property type="match status" value="2"/>
</dbReference>
<dbReference type="HAMAP" id="MF_00001">
    <property type="entry name" value="Asp_carb_tr"/>
    <property type="match status" value="1"/>
</dbReference>
<dbReference type="InterPro" id="IPR006132">
    <property type="entry name" value="Asp/Orn_carbamoyltranf_P-bd"/>
</dbReference>
<dbReference type="InterPro" id="IPR006130">
    <property type="entry name" value="Asp/Orn_carbamoylTrfase"/>
</dbReference>
<dbReference type="InterPro" id="IPR036901">
    <property type="entry name" value="Asp/Orn_carbamoylTrfase_sf"/>
</dbReference>
<dbReference type="InterPro" id="IPR002082">
    <property type="entry name" value="Asp_carbamoyltransf"/>
</dbReference>
<dbReference type="InterPro" id="IPR006131">
    <property type="entry name" value="Asp_carbamoyltransf_Asp/Orn-bd"/>
</dbReference>
<dbReference type="NCBIfam" id="TIGR00670">
    <property type="entry name" value="asp_carb_tr"/>
    <property type="match status" value="1"/>
</dbReference>
<dbReference type="NCBIfam" id="NF002032">
    <property type="entry name" value="PRK00856.1"/>
    <property type="match status" value="1"/>
</dbReference>
<dbReference type="PANTHER" id="PTHR45753:SF6">
    <property type="entry name" value="ASPARTATE CARBAMOYLTRANSFERASE"/>
    <property type="match status" value="1"/>
</dbReference>
<dbReference type="PANTHER" id="PTHR45753">
    <property type="entry name" value="ORNITHINE CARBAMOYLTRANSFERASE, MITOCHONDRIAL"/>
    <property type="match status" value="1"/>
</dbReference>
<dbReference type="Pfam" id="PF00185">
    <property type="entry name" value="OTCace"/>
    <property type="match status" value="1"/>
</dbReference>
<dbReference type="Pfam" id="PF02729">
    <property type="entry name" value="OTCace_N"/>
    <property type="match status" value="1"/>
</dbReference>
<dbReference type="PRINTS" id="PR00100">
    <property type="entry name" value="AOTCASE"/>
</dbReference>
<dbReference type="PRINTS" id="PR00101">
    <property type="entry name" value="ATCASE"/>
</dbReference>
<dbReference type="SUPFAM" id="SSF53671">
    <property type="entry name" value="Aspartate/ornithine carbamoyltransferase"/>
    <property type="match status" value="1"/>
</dbReference>
<dbReference type="PROSITE" id="PS00097">
    <property type="entry name" value="CARBAMOYLTRANSFERASE"/>
    <property type="match status" value="1"/>
</dbReference>
<protein>
    <recommendedName>
        <fullName evidence="1">Aspartate carbamoyltransferase catalytic subunit</fullName>
        <ecNumber evidence="1">2.1.3.2</ecNumber>
    </recommendedName>
    <alternativeName>
        <fullName evidence="1">Aspartate transcarbamylase</fullName>
        <shortName evidence="1">ATCase</shortName>
    </alternativeName>
</protein>